<organism>
    <name type="scientific">Bos taurus</name>
    <name type="common">Bovine</name>
    <dbReference type="NCBI Taxonomy" id="9913"/>
    <lineage>
        <taxon>Eukaryota</taxon>
        <taxon>Metazoa</taxon>
        <taxon>Chordata</taxon>
        <taxon>Craniata</taxon>
        <taxon>Vertebrata</taxon>
        <taxon>Euteleostomi</taxon>
        <taxon>Mammalia</taxon>
        <taxon>Eutheria</taxon>
        <taxon>Laurasiatheria</taxon>
        <taxon>Artiodactyla</taxon>
        <taxon>Ruminantia</taxon>
        <taxon>Pecora</taxon>
        <taxon>Bovidae</taxon>
        <taxon>Bovinae</taxon>
        <taxon>Bos</taxon>
    </lineage>
</organism>
<accession>Q2YDF2</accession>
<keyword id="KW-0007">Acetylation</keyword>
<keyword id="KW-0010">Activator</keyword>
<keyword id="KW-0175">Coiled coil</keyword>
<keyword id="KW-0539">Nucleus</keyword>
<keyword id="KW-1185">Reference proteome</keyword>
<keyword id="KW-0804">Transcription</keyword>
<keyword id="KW-0805">Transcription regulation</keyword>
<feature type="initiator methionine" description="Removed" evidence="2">
    <location>
        <position position="1"/>
    </location>
</feature>
<feature type="chain" id="PRO_0000239405" description="Mediator of RNA polymerase II transcription subunit 30">
    <location>
        <begin position="2"/>
        <end position="193"/>
    </location>
</feature>
<feature type="region of interest" description="Disordered" evidence="4">
    <location>
        <begin position="1"/>
        <end position="20"/>
    </location>
</feature>
<feature type="coiled-coil region" evidence="3">
    <location>
        <begin position="71"/>
        <end position="93"/>
    </location>
</feature>
<feature type="compositionally biased region" description="Low complexity" evidence="4">
    <location>
        <begin position="10"/>
        <end position="20"/>
    </location>
</feature>
<feature type="modified residue" description="N-acetylserine" evidence="2">
    <location>
        <position position="2"/>
    </location>
</feature>
<sequence>MSTPPLAASGMAPGPFAGPQAQQAAREVNTASLCRIGQETVQDIVYRTMEIFQLLRNMQLPNGVTYHTGTYQDRLAKLQDHLRQLSILFRKLRLVYDKCNENCGGMDPIPVEQLIPYVEEDGSKDDRAGPPRFASEERREIAEVNKFQVNSKGTQPYLHMYPFSSKLPSHSGCRIPLSRIPCAVQNSNRRINS</sequence>
<evidence type="ECO:0000250" key="1"/>
<evidence type="ECO:0000250" key="2">
    <source>
        <dbReference type="UniProtKB" id="Q96HR3"/>
    </source>
</evidence>
<evidence type="ECO:0000255" key="3"/>
<evidence type="ECO:0000256" key="4">
    <source>
        <dbReference type="SAM" id="MobiDB-lite"/>
    </source>
</evidence>
<evidence type="ECO:0000305" key="5"/>
<protein>
    <recommendedName>
        <fullName>Mediator of RNA polymerase II transcription subunit 30</fullName>
    </recommendedName>
    <alternativeName>
        <fullName>Mediator complex subunit 30</fullName>
    </alternativeName>
    <alternativeName>
        <fullName>Thyroid hormone receptor-associated protein 6</fullName>
    </alternativeName>
    <alternativeName>
        <fullName>Thyroid hormone receptor-associated protein complex 25 kDa component</fullName>
        <shortName>Trap25</shortName>
    </alternativeName>
</protein>
<dbReference type="EMBL" id="BC110250">
    <property type="protein sequence ID" value="AAI10251.1"/>
    <property type="molecule type" value="mRNA"/>
</dbReference>
<dbReference type="RefSeq" id="NP_001073086.1">
    <property type="nucleotide sequence ID" value="NM_001079618.2"/>
</dbReference>
<dbReference type="SMR" id="Q2YDF2"/>
<dbReference type="FunCoup" id="Q2YDF2">
    <property type="interactions" value="3493"/>
</dbReference>
<dbReference type="STRING" id="9913.ENSBTAP00000073342"/>
<dbReference type="PaxDb" id="9913-ENSBTAP00000009150"/>
<dbReference type="Ensembl" id="ENSBTAT00000113682.1">
    <property type="protein sequence ID" value="ENSBTAP00000087513.1"/>
    <property type="gene ID" value="ENSBTAG00000026254.6"/>
</dbReference>
<dbReference type="GeneID" id="613879"/>
<dbReference type="KEGG" id="bta:613879"/>
<dbReference type="CTD" id="90390"/>
<dbReference type="VEuPathDB" id="HostDB:ENSBTAG00000026254"/>
<dbReference type="VGNC" id="VGNC:31366">
    <property type="gene designation" value="MED30"/>
</dbReference>
<dbReference type="eggNOG" id="ENOG502QV3C">
    <property type="taxonomic scope" value="Eukaryota"/>
</dbReference>
<dbReference type="GeneTree" id="ENSGT00390000010887"/>
<dbReference type="HOGENOM" id="CLU_074190_1_1_1"/>
<dbReference type="InParanoid" id="Q2YDF2"/>
<dbReference type="OrthoDB" id="10067025at2759"/>
<dbReference type="TreeFam" id="TF324588"/>
<dbReference type="Reactome" id="R-BTA-212436">
    <property type="pathway name" value="Generic Transcription Pathway"/>
</dbReference>
<dbReference type="Reactome" id="R-BTA-9841922">
    <property type="pathway name" value="MLL4 and MLL3 complexes regulate expression of PPARG target genes in adipogenesis and hepatic steatosis"/>
</dbReference>
<dbReference type="Proteomes" id="UP000009136">
    <property type="component" value="Chromosome 14"/>
</dbReference>
<dbReference type="Bgee" id="ENSBTAG00000026254">
    <property type="expression patterns" value="Expressed in oocyte and 106 other cell types or tissues"/>
</dbReference>
<dbReference type="GO" id="GO:0016592">
    <property type="term" value="C:mediator complex"/>
    <property type="evidence" value="ECO:0000318"/>
    <property type="project" value="GO_Central"/>
</dbReference>
<dbReference type="GO" id="GO:0003712">
    <property type="term" value="F:transcription coregulator activity"/>
    <property type="evidence" value="ECO:0000318"/>
    <property type="project" value="GO_Central"/>
</dbReference>
<dbReference type="GO" id="GO:0045893">
    <property type="term" value="P:positive regulation of DNA-templated transcription"/>
    <property type="evidence" value="ECO:0000318"/>
    <property type="project" value="GO_Central"/>
</dbReference>
<dbReference type="InterPro" id="IPR021019">
    <property type="entry name" value="Mediator_Med30_met"/>
</dbReference>
<dbReference type="PANTHER" id="PTHR31705">
    <property type="entry name" value="MEDIATOR OF RNA POLYMERASE II TRANSCRIPTION SUBUNIT 30"/>
    <property type="match status" value="1"/>
</dbReference>
<dbReference type="PANTHER" id="PTHR31705:SF4">
    <property type="entry name" value="MEDIATOR OF RNA POLYMERASE II TRANSCRIPTION SUBUNIT 30"/>
    <property type="match status" value="1"/>
</dbReference>
<dbReference type="Pfam" id="PF11315">
    <property type="entry name" value="Med30"/>
    <property type="match status" value="1"/>
</dbReference>
<name>MED30_BOVIN</name>
<gene>
    <name type="primary">MED30</name>
    <name type="synonym">THRAP6</name>
    <name type="synonym">TRAP25</name>
</gene>
<comment type="function">
    <text evidence="1">Component of the Mediator complex, a coactivator involved in the regulated transcription of nearly all RNA polymerase II-dependent genes. Mediator functions as a bridge to convey information from gene-specific regulatory proteins to the basal RNA polymerase II transcription machinery. Mediator is recruited to promoters by direct interactions with regulatory proteins and serves as a scaffold for the assembly of a functional preinitiation complex with RNA polymerase II and the general transcription factors (By similarity).</text>
</comment>
<comment type="subunit">
    <text evidence="1">Component of the Mediator complex, which is composed of MED1, MED4, MED6, MED7, MED8, MED9, MED10, MED11, MED12, MED13, MED13L, MED14, MED15, MED16, MED17, MED18, MED19, MED20, MED21, MED22, MED23, MED24, MED25, MED26, MED27, MED29, MED30, MED31, CCNC, CDK8 and CDC2L6/CDK11. The MED12, MED13, CCNC and CDK8 subunits form a distinct module termed the CDK8 module. Mediator containing the CDK8 module is less active than Mediator lacking this module in supporting transcriptional activation. Individual preparations of the Mediator complex lacking one or more distinct subunits have been variously termed ARC, CRSP, DRIP, PC2, SMCC and TRAP (By similarity).</text>
</comment>
<comment type="subcellular location">
    <subcellularLocation>
        <location evidence="5">Nucleus</location>
    </subcellularLocation>
</comment>
<comment type="similarity">
    <text evidence="5">Belongs to the Mediator complex subunit 30 family.</text>
</comment>
<proteinExistence type="evidence at transcript level"/>
<reference key="1">
    <citation type="submission" date="2005-11" db="EMBL/GenBank/DDBJ databases">
        <authorList>
            <consortium name="NIH - Mammalian Gene Collection (MGC) project"/>
        </authorList>
    </citation>
    <scope>NUCLEOTIDE SEQUENCE [LARGE SCALE MRNA]</scope>
    <source>
        <strain>Crossbred X Angus</strain>
        <tissue>Liver</tissue>
    </source>
</reference>